<gene>
    <name evidence="1" type="primary">mntP</name>
    <name type="ordered locus">DP0890</name>
</gene>
<evidence type="ECO:0000255" key="1">
    <source>
        <dbReference type="HAMAP-Rule" id="MF_01521"/>
    </source>
</evidence>
<protein>
    <recommendedName>
        <fullName evidence="1">Putative manganese efflux pump MntP</fullName>
    </recommendedName>
</protein>
<sequence>MSTTYLLGLAVALAMDAFAVAIAVGIGLKRIRFRQAFRLSYHFGLFQALMPIIGWALGTGIRQFTQSYAHWIAFTLLALVGANMIREALSDDEEEPGEKDPTRGLRLIILSLATSIDALAVGLSLSMLEVSIWYPALIIGLVAGAFTLFGMLLGQRIAKLQRFSSYAEVLGGIILWAIGLNILYDNGVFSPFL</sequence>
<reference key="1">
    <citation type="journal article" date="2004" name="Environ. Microbiol.">
        <title>The genome of Desulfotalea psychrophila, a sulfate-reducing bacterium from permanently cold Arctic sediments.</title>
        <authorList>
            <person name="Rabus R."/>
            <person name="Ruepp A."/>
            <person name="Frickey T."/>
            <person name="Rattei T."/>
            <person name="Fartmann B."/>
            <person name="Stark M."/>
            <person name="Bauer M."/>
            <person name="Zibat A."/>
            <person name="Lombardot T."/>
            <person name="Becker I."/>
            <person name="Amann J."/>
            <person name="Gellner K."/>
            <person name="Teeling H."/>
            <person name="Leuschner W.D."/>
            <person name="Gloeckner F.-O."/>
            <person name="Lupas A.N."/>
            <person name="Amann R."/>
            <person name="Klenk H.-P."/>
        </authorList>
    </citation>
    <scope>NUCLEOTIDE SEQUENCE [LARGE SCALE GENOMIC DNA]</scope>
    <source>
        <strain>DSM 12343 / LSv54</strain>
    </source>
</reference>
<dbReference type="EMBL" id="CR522870">
    <property type="protein sequence ID" value="CAG35619.1"/>
    <property type="molecule type" value="Genomic_DNA"/>
</dbReference>
<dbReference type="RefSeq" id="WP_011188133.1">
    <property type="nucleotide sequence ID" value="NC_006138.1"/>
</dbReference>
<dbReference type="STRING" id="177439.DP0890"/>
<dbReference type="KEGG" id="dps:DP0890"/>
<dbReference type="eggNOG" id="COG1971">
    <property type="taxonomic scope" value="Bacteria"/>
</dbReference>
<dbReference type="HOGENOM" id="CLU_096410_3_0_7"/>
<dbReference type="OrthoDB" id="9811590at2"/>
<dbReference type="Proteomes" id="UP000000602">
    <property type="component" value="Chromosome"/>
</dbReference>
<dbReference type="GO" id="GO:0005886">
    <property type="term" value="C:plasma membrane"/>
    <property type="evidence" value="ECO:0007669"/>
    <property type="project" value="UniProtKB-SubCell"/>
</dbReference>
<dbReference type="GO" id="GO:0005384">
    <property type="term" value="F:manganese ion transmembrane transporter activity"/>
    <property type="evidence" value="ECO:0007669"/>
    <property type="project" value="UniProtKB-UniRule"/>
</dbReference>
<dbReference type="HAMAP" id="MF_01521">
    <property type="entry name" value="MntP_pump"/>
    <property type="match status" value="1"/>
</dbReference>
<dbReference type="InterPro" id="IPR003810">
    <property type="entry name" value="Mntp/YtaF"/>
</dbReference>
<dbReference type="InterPro" id="IPR022929">
    <property type="entry name" value="Put_MntP"/>
</dbReference>
<dbReference type="PANTHER" id="PTHR35529">
    <property type="entry name" value="MANGANESE EFFLUX PUMP MNTP-RELATED"/>
    <property type="match status" value="1"/>
</dbReference>
<dbReference type="PANTHER" id="PTHR35529:SF1">
    <property type="entry name" value="MANGANESE EFFLUX PUMP MNTP-RELATED"/>
    <property type="match status" value="1"/>
</dbReference>
<dbReference type="Pfam" id="PF02659">
    <property type="entry name" value="Mntp"/>
    <property type="match status" value="1"/>
</dbReference>
<comment type="function">
    <text evidence="1">Probably functions as a manganese efflux pump.</text>
</comment>
<comment type="subcellular location">
    <subcellularLocation>
        <location evidence="1">Cell inner membrane</location>
        <topology evidence="1">Multi-pass membrane protein</topology>
    </subcellularLocation>
</comment>
<comment type="similarity">
    <text evidence="1">Belongs to the MntP (TC 9.B.29) family.</text>
</comment>
<name>MNTP_DESPS</name>
<proteinExistence type="inferred from homology"/>
<feature type="chain" id="PRO_0000155647" description="Putative manganese efflux pump MntP">
    <location>
        <begin position="1"/>
        <end position="193"/>
    </location>
</feature>
<feature type="transmembrane region" description="Helical" evidence="1">
    <location>
        <begin position="6"/>
        <end position="26"/>
    </location>
</feature>
<feature type="transmembrane region" description="Helical" evidence="1">
    <location>
        <begin position="41"/>
        <end position="61"/>
    </location>
</feature>
<feature type="transmembrane region" description="Helical" evidence="1">
    <location>
        <begin position="65"/>
        <end position="85"/>
    </location>
</feature>
<feature type="transmembrane region" description="Helical" evidence="1">
    <location>
        <begin position="107"/>
        <end position="127"/>
    </location>
</feature>
<feature type="transmembrane region" description="Helical" evidence="1">
    <location>
        <begin position="132"/>
        <end position="152"/>
    </location>
</feature>
<feature type="transmembrane region" description="Helical" evidence="1">
    <location>
        <begin position="169"/>
        <end position="189"/>
    </location>
</feature>
<keyword id="KW-0997">Cell inner membrane</keyword>
<keyword id="KW-1003">Cell membrane</keyword>
<keyword id="KW-0406">Ion transport</keyword>
<keyword id="KW-0464">Manganese</keyword>
<keyword id="KW-0472">Membrane</keyword>
<keyword id="KW-1185">Reference proteome</keyword>
<keyword id="KW-0812">Transmembrane</keyword>
<keyword id="KW-1133">Transmembrane helix</keyword>
<keyword id="KW-0813">Transport</keyword>
<accession>Q6APV5</accession>
<organism>
    <name type="scientific">Desulfotalea psychrophila (strain LSv54 / DSM 12343)</name>
    <dbReference type="NCBI Taxonomy" id="177439"/>
    <lineage>
        <taxon>Bacteria</taxon>
        <taxon>Pseudomonadati</taxon>
        <taxon>Thermodesulfobacteriota</taxon>
        <taxon>Desulfobulbia</taxon>
        <taxon>Desulfobulbales</taxon>
        <taxon>Desulfocapsaceae</taxon>
        <taxon>Desulfotalea</taxon>
    </lineage>
</organism>